<feature type="chain" id="PRO_0000253126" description="Putative membrane protein insertion efficiency factor">
    <location>
        <begin position="1"/>
        <end position="75"/>
    </location>
</feature>
<sequence length="75" mass="8771">MQRLLITLIRLYQYLLSPWLGHHCRFFPTCSNYAMDAIGRFGAMRGAYLTIRRLMRCHPWHPGGIDPVPEKLGKQ</sequence>
<proteinExistence type="inferred from homology"/>
<dbReference type="EMBL" id="AE017282">
    <property type="protein sequence ID" value="AAU90905.1"/>
    <property type="molecule type" value="Genomic_DNA"/>
</dbReference>
<dbReference type="STRING" id="243233.MCA3036"/>
<dbReference type="GeneID" id="88225198"/>
<dbReference type="KEGG" id="mca:MCA3036"/>
<dbReference type="eggNOG" id="COG0759">
    <property type="taxonomic scope" value="Bacteria"/>
</dbReference>
<dbReference type="HOGENOM" id="CLU_144811_5_2_6"/>
<dbReference type="Proteomes" id="UP000006821">
    <property type="component" value="Chromosome"/>
</dbReference>
<dbReference type="GO" id="GO:0005886">
    <property type="term" value="C:plasma membrane"/>
    <property type="evidence" value="ECO:0007669"/>
    <property type="project" value="UniProtKB-SubCell"/>
</dbReference>
<dbReference type="HAMAP" id="MF_00386">
    <property type="entry name" value="UPF0161_YidD"/>
    <property type="match status" value="1"/>
</dbReference>
<dbReference type="InterPro" id="IPR002696">
    <property type="entry name" value="Membr_insert_effic_factor_YidD"/>
</dbReference>
<dbReference type="NCBIfam" id="TIGR00278">
    <property type="entry name" value="membrane protein insertion efficiency factor YidD"/>
    <property type="match status" value="1"/>
</dbReference>
<dbReference type="PANTHER" id="PTHR33383">
    <property type="entry name" value="MEMBRANE PROTEIN INSERTION EFFICIENCY FACTOR-RELATED"/>
    <property type="match status" value="1"/>
</dbReference>
<dbReference type="PANTHER" id="PTHR33383:SF1">
    <property type="entry name" value="MEMBRANE PROTEIN INSERTION EFFICIENCY FACTOR-RELATED"/>
    <property type="match status" value="1"/>
</dbReference>
<dbReference type="Pfam" id="PF01809">
    <property type="entry name" value="YidD"/>
    <property type="match status" value="1"/>
</dbReference>
<dbReference type="SMART" id="SM01234">
    <property type="entry name" value="Haemolytic"/>
    <property type="match status" value="1"/>
</dbReference>
<name>YIDD_METCA</name>
<keyword id="KW-0997">Cell inner membrane</keyword>
<keyword id="KW-1003">Cell membrane</keyword>
<keyword id="KW-0472">Membrane</keyword>
<keyword id="KW-1185">Reference proteome</keyword>
<accession>Q602M7</accession>
<protein>
    <recommendedName>
        <fullName evidence="1">Putative membrane protein insertion efficiency factor</fullName>
    </recommendedName>
</protein>
<comment type="function">
    <text evidence="1">Could be involved in insertion of integral membrane proteins into the membrane.</text>
</comment>
<comment type="subcellular location">
    <subcellularLocation>
        <location evidence="1">Cell inner membrane</location>
        <topology evidence="1">Peripheral membrane protein</topology>
        <orientation evidence="1">Cytoplasmic side</orientation>
    </subcellularLocation>
</comment>
<comment type="similarity">
    <text evidence="1">Belongs to the UPF0161 family.</text>
</comment>
<reference key="1">
    <citation type="journal article" date="2004" name="PLoS Biol.">
        <title>Genomic insights into methanotrophy: the complete genome sequence of Methylococcus capsulatus (Bath).</title>
        <authorList>
            <person name="Ward N.L."/>
            <person name="Larsen O."/>
            <person name="Sakwa J."/>
            <person name="Bruseth L."/>
            <person name="Khouri H.M."/>
            <person name="Durkin A.S."/>
            <person name="Dimitrov G."/>
            <person name="Jiang L."/>
            <person name="Scanlan D."/>
            <person name="Kang K.H."/>
            <person name="Lewis M.R."/>
            <person name="Nelson K.E."/>
            <person name="Methe B.A."/>
            <person name="Wu M."/>
            <person name="Heidelberg J.F."/>
            <person name="Paulsen I.T."/>
            <person name="Fouts D.E."/>
            <person name="Ravel J."/>
            <person name="Tettelin H."/>
            <person name="Ren Q."/>
            <person name="Read T.D."/>
            <person name="DeBoy R.T."/>
            <person name="Seshadri R."/>
            <person name="Salzberg S.L."/>
            <person name="Jensen H.B."/>
            <person name="Birkeland N.K."/>
            <person name="Nelson W.C."/>
            <person name="Dodson R.J."/>
            <person name="Grindhaug S.H."/>
            <person name="Holt I.E."/>
            <person name="Eidhammer I."/>
            <person name="Jonasen I."/>
            <person name="Vanaken S."/>
            <person name="Utterback T.R."/>
            <person name="Feldblyum T.V."/>
            <person name="Fraser C.M."/>
            <person name="Lillehaug J.R."/>
            <person name="Eisen J.A."/>
        </authorList>
    </citation>
    <scope>NUCLEOTIDE SEQUENCE [LARGE SCALE GENOMIC DNA]</scope>
    <source>
        <strain>ATCC 33009 / NCIMB 11132 / Bath</strain>
    </source>
</reference>
<evidence type="ECO:0000255" key="1">
    <source>
        <dbReference type="HAMAP-Rule" id="MF_00386"/>
    </source>
</evidence>
<organism>
    <name type="scientific">Methylococcus capsulatus (strain ATCC 33009 / NCIMB 11132 / Bath)</name>
    <dbReference type="NCBI Taxonomy" id="243233"/>
    <lineage>
        <taxon>Bacteria</taxon>
        <taxon>Pseudomonadati</taxon>
        <taxon>Pseudomonadota</taxon>
        <taxon>Gammaproteobacteria</taxon>
        <taxon>Methylococcales</taxon>
        <taxon>Methylococcaceae</taxon>
        <taxon>Methylococcus</taxon>
    </lineage>
</organism>
<gene>
    <name type="ordered locus">MCA3036</name>
</gene>